<gene>
    <name type="ordered locus">SPN23F11830</name>
</gene>
<evidence type="ECO:0000255" key="1">
    <source>
        <dbReference type="HAMAP-Rule" id="MF_00245"/>
    </source>
</evidence>
<proteinExistence type="inferred from homology"/>
<name>Y1183_STRPJ</name>
<organism>
    <name type="scientific">Streptococcus pneumoniae (strain ATCC 700669 / Spain 23F-1)</name>
    <dbReference type="NCBI Taxonomy" id="561276"/>
    <lineage>
        <taxon>Bacteria</taxon>
        <taxon>Bacillati</taxon>
        <taxon>Bacillota</taxon>
        <taxon>Bacilli</taxon>
        <taxon>Lactobacillales</taxon>
        <taxon>Streptococcaceae</taxon>
        <taxon>Streptococcus</taxon>
    </lineage>
</organism>
<reference key="1">
    <citation type="journal article" date="2009" name="J. Bacteriol.">
        <title>Role of conjugative elements in the evolution of the multidrug-resistant pandemic clone Streptococcus pneumoniae Spain23F ST81.</title>
        <authorList>
            <person name="Croucher N.J."/>
            <person name="Walker D."/>
            <person name="Romero P."/>
            <person name="Lennard N."/>
            <person name="Paterson G.K."/>
            <person name="Bason N.C."/>
            <person name="Mitchell A.M."/>
            <person name="Quail M.A."/>
            <person name="Andrew P.W."/>
            <person name="Parkhill J."/>
            <person name="Bentley S.D."/>
            <person name="Mitchell T.J."/>
        </authorList>
    </citation>
    <scope>NUCLEOTIDE SEQUENCE [LARGE SCALE GENOMIC DNA]</scope>
    <source>
        <strain>ATCC 700669 / Spain 23F-1</strain>
    </source>
</reference>
<comment type="function">
    <text evidence="1">Might take part in the signal recognition particle (SRP) pathway. This is inferred from the conservation of its genetic proximity to ftsY/ffh. May be a regulatory protein.</text>
</comment>
<comment type="similarity">
    <text evidence="1">Belongs to the UPF0122 family.</text>
</comment>
<sequence>MEIEKTNRMNALFEFYAALLTDKQMNYIELYYADDYSLAEIAEEFGVSRQAVYDNIKRTEKILEDYEMKLHMYSDYIVRSQIFDQILERYPKDNFLQEQIEILTSIDNRE</sequence>
<protein>
    <recommendedName>
        <fullName evidence="1">UPF0122 protein SPN23F11830</fullName>
    </recommendedName>
</protein>
<dbReference type="EMBL" id="FM211187">
    <property type="protein sequence ID" value="CAR68989.1"/>
    <property type="molecule type" value="Genomic_DNA"/>
</dbReference>
<dbReference type="RefSeq" id="WP_000402071.1">
    <property type="nucleotide sequence ID" value="NC_011900.1"/>
</dbReference>
<dbReference type="SMR" id="B8ZJV2"/>
<dbReference type="KEGG" id="sne:SPN23F11830"/>
<dbReference type="HOGENOM" id="CLU_129218_1_0_9"/>
<dbReference type="Gene3D" id="1.10.10.10">
    <property type="entry name" value="Winged helix-like DNA-binding domain superfamily/Winged helix DNA-binding domain"/>
    <property type="match status" value="1"/>
</dbReference>
<dbReference type="HAMAP" id="MF_00245">
    <property type="entry name" value="UPF0122"/>
    <property type="match status" value="1"/>
</dbReference>
<dbReference type="InterPro" id="IPR013324">
    <property type="entry name" value="RNA_pol_sigma_r3/r4-like"/>
</dbReference>
<dbReference type="InterPro" id="IPR007394">
    <property type="entry name" value="UPF0122"/>
</dbReference>
<dbReference type="InterPro" id="IPR054831">
    <property type="entry name" value="UPF0122_fam_protein"/>
</dbReference>
<dbReference type="InterPro" id="IPR036388">
    <property type="entry name" value="WH-like_DNA-bd_sf"/>
</dbReference>
<dbReference type="NCBIfam" id="NF001066">
    <property type="entry name" value="PRK00118.1-1"/>
    <property type="match status" value="1"/>
</dbReference>
<dbReference type="NCBIfam" id="NF001068">
    <property type="entry name" value="PRK00118.1-4"/>
    <property type="match status" value="1"/>
</dbReference>
<dbReference type="NCBIfam" id="NF001070">
    <property type="entry name" value="PRK00118.1-6"/>
    <property type="match status" value="1"/>
</dbReference>
<dbReference type="NCBIfam" id="NF045758">
    <property type="entry name" value="YlxM"/>
    <property type="match status" value="1"/>
</dbReference>
<dbReference type="PANTHER" id="PTHR40083">
    <property type="entry name" value="UPF0122 PROTEIN CBO2450/CLC_2298"/>
    <property type="match status" value="1"/>
</dbReference>
<dbReference type="PANTHER" id="PTHR40083:SF1">
    <property type="entry name" value="UPF0122 PROTEIN YLXM"/>
    <property type="match status" value="1"/>
</dbReference>
<dbReference type="Pfam" id="PF04297">
    <property type="entry name" value="UPF0122"/>
    <property type="match status" value="1"/>
</dbReference>
<dbReference type="SUPFAM" id="SSF88659">
    <property type="entry name" value="Sigma3 and sigma4 domains of RNA polymerase sigma factors"/>
    <property type="match status" value="1"/>
</dbReference>
<accession>B8ZJV2</accession>
<feature type="chain" id="PRO_1000197594" description="UPF0122 protein SPN23F11830">
    <location>
        <begin position="1"/>
        <end position="110"/>
    </location>
</feature>